<proteinExistence type="inferred from homology"/>
<dbReference type="EC" id="3.1.21.10" evidence="1"/>
<dbReference type="EMBL" id="AE002160">
    <property type="protein sequence ID" value="AAF39592.1"/>
    <property type="molecule type" value="Genomic_DNA"/>
</dbReference>
<dbReference type="PIR" id="E81662">
    <property type="entry name" value="E81662"/>
</dbReference>
<dbReference type="RefSeq" id="WP_010231561.1">
    <property type="nucleotide sequence ID" value="NZ_CP063055.1"/>
</dbReference>
<dbReference type="SMR" id="Q9PJN9"/>
<dbReference type="GeneID" id="1246155"/>
<dbReference type="KEGG" id="cmu:TC_0789"/>
<dbReference type="eggNOG" id="COG0817">
    <property type="taxonomic scope" value="Bacteria"/>
</dbReference>
<dbReference type="HOGENOM" id="CLU_091257_3_0_0"/>
<dbReference type="OrthoDB" id="9805499at2"/>
<dbReference type="Proteomes" id="UP000000800">
    <property type="component" value="Chromosome"/>
</dbReference>
<dbReference type="GO" id="GO:0005737">
    <property type="term" value="C:cytoplasm"/>
    <property type="evidence" value="ECO:0007669"/>
    <property type="project" value="UniProtKB-SubCell"/>
</dbReference>
<dbReference type="GO" id="GO:0048476">
    <property type="term" value="C:Holliday junction resolvase complex"/>
    <property type="evidence" value="ECO:0007669"/>
    <property type="project" value="UniProtKB-UniRule"/>
</dbReference>
<dbReference type="GO" id="GO:0008821">
    <property type="term" value="F:crossover junction DNA endonuclease activity"/>
    <property type="evidence" value="ECO:0007669"/>
    <property type="project" value="UniProtKB-UniRule"/>
</dbReference>
<dbReference type="GO" id="GO:0003677">
    <property type="term" value="F:DNA binding"/>
    <property type="evidence" value="ECO:0007669"/>
    <property type="project" value="UniProtKB-KW"/>
</dbReference>
<dbReference type="GO" id="GO:0000287">
    <property type="term" value="F:magnesium ion binding"/>
    <property type="evidence" value="ECO:0007669"/>
    <property type="project" value="UniProtKB-UniRule"/>
</dbReference>
<dbReference type="GO" id="GO:0006310">
    <property type="term" value="P:DNA recombination"/>
    <property type="evidence" value="ECO:0007669"/>
    <property type="project" value="UniProtKB-UniRule"/>
</dbReference>
<dbReference type="GO" id="GO:0006281">
    <property type="term" value="P:DNA repair"/>
    <property type="evidence" value="ECO:0007669"/>
    <property type="project" value="UniProtKB-UniRule"/>
</dbReference>
<dbReference type="CDD" id="cd16962">
    <property type="entry name" value="RuvC"/>
    <property type="match status" value="1"/>
</dbReference>
<dbReference type="FunFam" id="3.30.420.10:FF:000002">
    <property type="entry name" value="Crossover junction endodeoxyribonuclease RuvC"/>
    <property type="match status" value="1"/>
</dbReference>
<dbReference type="Gene3D" id="3.30.420.10">
    <property type="entry name" value="Ribonuclease H-like superfamily/Ribonuclease H"/>
    <property type="match status" value="1"/>
</dbReference>
<dbReference type="HAMAP" id="MF_00034">
    <property type="entry name" value="RuvC"/>
    <property type="match status" value="1"/>
</dbReference>
<dbReference type="InterPro" id="IPR012337">
    <property type="entry name" value="RNaseH-like_sf"/>
</dbReference>
<dbReference type="InterPro" id="IPR036397">
    <property type="entry name" value="RNaseH_sf"/>
</dbReference>
<dbReference type="InterPro" id="IPR020563">
    <property type="entry name" value="X-over_junc_endoDNase_Mg_BS"/>
</dbReference>
<dbReference type="InterPro" id="IPR002176">
    <property type="entry name" value="X-over_junc_endoDNase_RuvC"/>
</dbReference>
<dbReference type="NCBIfam" id="TIGR00228">
    <property type="entry name" value="ruvC"/>
    <property type="match status" value="1"/>
</dbReference>
<dbReference type="PANTHER" id="PTHR30194">
    <property type="entry name" value="CROSSOVER JUNCTION ENDODEOXYRIBONUCLEASE RUVC"/>
    <property type="match status" value="1"/>
</dbReference>
<dbReference type="PANTHER" id="PTHR30194:SF3">
    <property type="entry name" value="CROSSOVER JUNCTION ENDODEOXYRIBONUCLEASE RUVC"/>
    <property type="match status" value="1"/>
</dbReference>
<dbReference type="Pfam" id="PF02075">
    <property type="entry name" value="RuvC"/>
    <property type="match status" value="1"/>
</dbReference>
<dbReference type="PRINTS" id="PR00696">
    <property type="entry name" value="RSOLVASERUVC"/>
</dbReference>
<dbReference type="SUPFAM" id="SSF53098">
    <property type="entry name" value="Ribonuclease H-like"/>
    <property type="match status" value="1"/>
</dbReference>
<dbReference type="PROSITE" id="PS01321">
    <property type="entry name" value="RUVC"/>
    <property type="match status" value="1"/>
</dbReference>
<reference key="1">
    <citation type="journal article" date="2000" name="Nucleic Acids Res.">
        <title>Genome sequences of Chlamydia trachomatis MoPn and Chlamydia pneumoniae AR39.</title>
        <authorList>
            <person name="Read T.D."/>
            <person name="Brunham R.C."/>
            <person name="Shen C."/>
            <person name="Gill S.R."/>
            <person name="Heidelberg J.F."/>
            <person name="White O."/>
            <person name="Hickey E.K."/>
            <person name="Peterson J.D."/>
            <person name="Utterback T.R."/>
            <person name="Berry K.J."/>
            <person name="Bass S."/>
            <person name="Linher K.D."/>
            <person name="Weidman J.F."/>
            <person name="Khouri H.M."/>
            <person name="Craven B."/>
            <person name="Bowman C."/>
            <person name="Dodson R.J."/>
            <person name="Gwinn M.L."/>
            <person name="Nelson W.C."/>
            <person name="DeBoy R.T."/>
            <person name="Kolonay J.F."/>
            <person name="McClarty G."/>
            <person name="Salzberg S.L."/>
            <person name="Eisen J.A."/>
            <person name="Fraser C.M."/>
        </authorList>
    </citation>
    <scope>NUCLEOTIDE SEQUENCE [LARGE SCALE GENOMIC DNA]</scope>
    <source>
        <strain>MoPn / Nigg</strain>
    </source>
</reference>
<sequence length="170" mass="18837">MADLIMGIDPGTLVCGYAFIRVENRYQIQPHSFGKIKLSQKQALSHRYRQLFTEISTILQREAPKAVVLETQYVHKNPQSTIKLGMARGVLLLAASLQDISVFEYAPNTAKKAAVGKGNASKQQVQLMVSKLLNIQDLLADDNEDIADAFALAMCHAHLAPYQDLKKSLL</sequence>
<feature type="chain" id="PRO_0000183087" description="Crossover junction endodeoxyribonuclease RuvC">
    <location>
        <begin position="1"/>
        <end position="170"/>
    </location>
</feature>
<feature type="active site" evidence="1">
    <location>
        <position position="9"/>
    </location>
</feature>
<feature type="active site" evidence="1">
    <location>
        <position position="70"/>
    </location>
</feature>
<feature type="active site" evidence="1">
    <location>
        <position position="145"/>
    </location>
</feature>
<feature type="binding site" evidence="1">
    <location>
        <position position="9"/>
    </location>
    <ligand>
        <name>Mg(2+)</name>
        <dbReference type="ChEBI" id="CHEBI:18420"/>
        <label>1</label>
    </ligand>
</feature>
<feature type="binding site" evidence="1">
    <location>
        <position position="70"/>
    </location>
    <ligand>
        <name>Mg(2+)</name>
        <dbReference type="ChEBI" id="CHEBI:18420"/>
        <label>2</label>
    </ligand>
</feature>
<feature type="binding site" evidence="1">
    <location>
        <position position="145"/>
    </location>
    <ligand>
        <name>Mg(2+)</name>
        <dbReference type="ChEBI" id="CHEBI:18420"/>
        <label>1</label>
    </ligand>
</feature>
<name>RUVC_CHLMU</name>
<keyword id="KW-0963">Cytoplasm</keyword>
<keyword id="KW-0227">DNA damage</keyword>
<keyword id="KW-0233">DNA recombination</keyword>
<keyword id="KW-0234">DNA repair</keyword>
<keyword id="KW-0238">DNA-binding</keyword>
<keyword id="KW-0255">Endonuclease</keyword>
<keyword id="KW-0378">Hydrolase</keyword>
<keyword id="KW-0460">Magnesium</keyword>
<keyword id="KW-0479">Metal-binding</keyword>
<keyword id="KW-0540">Nuclease</keyword>
<evidence type="ECO:0000255" key="1">
    <source>
        <dbReference type="HAMAP-Rule" id="MF_00034"/>
    </source>
</evidence>
<evidence type="ECO:0000305" key="2"/>
<comment type="function">
    <text evidence="1">The RuvA-RuvB-RuvC complex processes Holliday junction (HJ) DNA during genetic recombination and DNA repair. Endonuclease that resolves HJ intermediates. Cleaves cruciform DNA by making single-stranded nicks across the HJ at symmetrical positions within the homologous arms, yielding a 5'-phosphate and a 3'-hydroxyl group; requires a central core of homology in the junction. The consensus cleavage sequence is 5'-(A/T)TT(C/G)-3'. Cleavage occurs on the 3'-side of the TT dinucleotide at the point of strand exchange. HJ branch migration catalyzed by RuvA-RuvB allows RuvC to scan DNA until it finds its consensus sequence, where it cleaves and resolves the cruciform DNA.</text>
</comment>
<comment type="catalytic activity">
    <reaction evidence="1">
        <text>Endonucleolytic cleavage at a junction such as a reciprocal single-stranded crossover between two homologous DNA duplexes (Holliday junction).</text>
        <dbReference type="EC" id="3.1.21.10"/>
    </reaction>
</comment>
<comment type="cofactor">
    <cofactor evidence="1">
        <name>Mg(2+)</name>
        <dbReference type="ChEBI" id="CHEBI:18420"/>
    </cofactor>
    <text evidence="1">Binds 2 Mg(2+) ion per subunit.</text>
</comment>
<comment type="subunit">
    <text evidence="1">Homodimer which binds Holliday junction (HJ) DNA. The HJ becomes 2-fold symmetrical on binding to RuvC with unstacked arms; it has a different conformation from HJ DNA in complex with RuvA. In the full resolvosome a probable DNA-RuvA(4)-RuvB(12)-RuvC(2) complex forms which resolves the HJ.</text>
</comment>
<comment type="subcellular location">
    <subcellularLocation>
        <location evidence="1">Cytoplasm</location>
    </subcellularLocation>
</comment>
<comment type="similarity">
    <text evidence="1 2">Belongs to the RuvC family.</text>
</comment>
<gene>
    <name evidence="1" type="primary">ruvC</name>
    <name type="ordered locus">TC_0789</name>
</gene>
<organism>
    <name type="scientific">Chlamydia muridarum (strain MoPn / Nigg)</name>
    <dbReference type="NCBI Taxonomy" id="243161"/>
    <lineage>
        <taxon>Bacteria</taxon>
        <taxon>Pseudomonadati</taxon>
        <taxon>Chlamydiota</taxon>
        <taxon>Chlamydiia</taxon>
        <taxon>Chlamydiales</taxon>
        <taxon>Chlamydiaceae</taxon>
        <taxon>Chlamydia/Chlamydophila group</taxon>
        <taxon>Chlamydia</taxon>
    </lineage>
</organism>
<protein>
    <recommendedName>
        <fullName evidence="1">Crossover junction endodeoxyribonuclease RuvC</fullName>
        <ecNumber evidence="1">3.1.21.10</ecNumber>
    </recommendedName>
    <alternativeName>
        <fullName evidence="1">Holliday junction nuclease RuvC</fullName>
    </alternativeName>
    <alternativeName>
        <fullName evidence="1">Holliday junction resolvase RuvC</fullName>
    </alternativeName>
</protein>
<accession>Q9PJN9</accession>